<feature type="chain" id="PRO_0000169364" description="Uncharacterized protein YggE">
    <location>
        <begin position="1"/>
        <end position="246"/>
    </location>
</feature>
<keyword id="KW-1185">Reference proteome</keyword>
<reference key="1">
    <citation type="journal article" date="1997" name="Science">
        <title>The complete genome sequence of Escherichia coli K-12.</title>
        <authorList>
            <person name="Blattner F.R."/>
            <person name="Plunkett G. III"/>
            <person name="Bloch C.A."/>
            <person name="Perna N.T."/>
            <person name="Burland V."/>
            <person name="Riley M."/>
            <person name="Collado-Vides J."/>
            <person name="Glasner J.D."/>
            <person name="Rode C.K."/>
            <person name="Mayhew G.F."/>
            <person name="Gregor J."/>
            <person name="Davis N.W."/>
            <person name="Kirkpatrick H.A."/>
            <person name="Goeden M.A."/>
            <person name="Rose D.J."/>
            <person name="Mau B."/>
            <person name="Shao Y."/>
        </authorList>
    </citation>
    <scope>NUCLEOTIDE SEQUENCE [LARGE SCALE GENOMIC DNA]</scope>
    <source>
        <strain>K12 / MG1655 / ATCC 47076</strain>
    </source>
</reference>
<reference key="2">
    <citation type="journal article" date="2006" name="Mol. Syst. Biol.">
        <title>Highly accurate genome sequences of Escherichia coli K-12 strains MG1655 and W3110.</title>
        <authorList>
            <person name="Hayashi K."/>
            <person name="Morooka N."/>
            <person name="Yamamoto Y."/>
            <person name="Fujita K."/>
            <person name="Isono K."/>
            <person name="Choi S."/>
            <person name="Ohtsubo E."/>
            <person name="Baba T."/>
            <person name="Wanner B.L."/>
            <person name="Mori H."/>
            <person name="Horiuchi T."/>
        </authorList>
    </citation>
    <scope>NUCLEOTIDE SEQUENCE [LARGE SCALE GENOMIC DNA]</scope>
    <source>
        <strain>K12 / W3110 / ATCC 27325 / DSM 5911</strain>
    </source>
</reference>
<reference key="3">
    <citation type="journal article" date="1989" name="Mol. Microbiol.">
        <title>Identification, molecular cloning and sequence analysis of a gene cluster encoding the class II fructose 1,6-bisphosphate aldolase, 3-phosphoglycerate kinase and a putative second glyceraldehyde 3-phosphate dehydrogenase of Escherichia coli.</title>
        <authorList>
            <person name="Alefounder P.R."/>
            <person name="Perham R.N."/>
        </authorList>
    </citation>
    <scope>NUCLEOTIDE SEQUENCE [GENOMIC DNA] OF 1-155</scope>
    <source>
        <strain>K12 / CS520</strain>
    </source>
</reference>
<proteinExistence type="predicted"/>
<organism>
    <name type="scientific">Escherichia coli (strain K12)</name>
    <dbReference type="NCBI Taxonomy" id="83333"/>
    <lineage>
        <taxon>Bacteria</taxon>
        <taxon>Pseudomonadati</taxon>
        <taxon>Pseudomonadota</taxon>
        <taxon>Gammaproteobacteria</taxon>
        <taxon>Enterobacterales</taxon>
        <taxon>Enterobacteriaceae</taxon>
        <taxon>Escherichia</taxon>
    </lineage>
</organism>
<gene>
    <name type="primary">yggE</name>
    <name type="ordered locus">b2922</name>
    <name type="ordered locus">JW2889</name>
</gene>
<sequence length="246" mass="26635">MKFKVIALAALMGISGMAAQANELPDGPHIVTSGTASVDAVPDIATLAIEVNVAAKDAATAKKQADERVAQYISFLELNQIAKKDISSANLRTQPDYDYQDGKSILKGYRAVRTVEVTLRQLDKLNSLLDGALKAGLNEIRSVSLGVAQPDAYKDKARKAAIDNAIHQAQELANGFHRKLGPVYSVRYHVSNYQPSPMVRMMKADAAPVSAQETYEQAAIQFDDQVDVVFQLEPVDQQPAKTPAAQ</sequence>
<dbReference type="EMBL" id="U28377">
    <property type="protein sequence ID" value="AAA69089.1"/>
    <property type="molecule type" value="Genomic_DNA"/>
</dbReference>
<dbReference type="EMBL" id="U00096">
    <property type="protein sequence ID" value="AAC75959.1"/>
    <property type="molecule type" value="Genomic_DNA"/>
</dbReference>
<dbReference type="EMBL" id="AP009048">
    <property type="protein sequence ID" value="BAE76986.1"/>
    <property type="molecule type" value="Genomic_DNA"/>
</dbReference>
<dbReference type="EMBL" id="X14436">
    <property type="protein sequence ID" value="CAA32608.1"/>
    <property type="molecule type" value="Genomic_DNA"/>
</dbReference>
<dbReference type="PIR" id="A65077">
    <property type="entry name" value="A65077"/>
</dbReference>
<dbReference type="RefSeq" id="NP_417397.1">
    <property type="nucleotide sequence ID" value="NC_000913.3"/>
</dbReference>
<dbReference type="RefSeq" id="WP_000669834.1">
    <property type="nucleotide sequence ID" value="NZ_STEB01000001.1"/>
</dbReference>
<dbReference type="SMR" id="P0ADS6"/>
<dbReference type="BioGRID" id="4259350">
    <property type="interactions" value="36"/>
</dbReference>
<dbReference type="DIP" id="DIP-47891N"/>
<dbReference type="FunCoup" id="P0ADS6">
    <property type="interactions" value="35"/>
</dbReference>
<dbReference type="IntAct" id="P0ADS6">
    <property type="interactions" value="29"/>
</dbReference>
<dbReference type="STRING" id="511145.b2922"/>
<dbReference type="jPOST" id="P0ADS6"/>
<dbReference type="PaxDb" id="511145-b2922"/>
<dbReference type="EnsemblBacteria" id="AAC75959">
    <property type="protein sequence ID" value="AAC75959"/>
    <property type="gene ID" value="b2922"/>
</dbReference>
<dbReference type="GeneID" id="947398"/>
<dbReference type="KEGG" id="ecj:JW2889"/>
<dbReference type="KEGG" id="eco:b2922"/>
<dbReference type="KEGG" id="ecoc:C3026_16010"/>
<dbReference type="PATRIC" id="fig|1411691.4.peg.3810"/>
<dbReference type="EchoBASE" id="EB1225"/>
<dbReference type="eggNOG" id="COG2968">
    <property type="taxonomic scope" value="Bacteria"/>
</dbReference>
<dbReference type="HOGENOM" id="CLU_080344_3_0_6"/>
<dbReference type="InParanoid" id="P0ADS6"/>
<dbReference type="OMA" id="MNQTNER"/>
<dbReference type="OrthoDB" id="5985609at2"/>
<dbReference type="PhylomeDB" id="P0ADS6"/>
<dbReference type="BioCyc" id="EcoCyc:EG11244-MONOMER"/>
<dbReference type="PRO" id="PR:P0ADS6"/>
<dbReference type="Proteomes" id="UP000000625">
    <property type="component" value="Chromosome"/>
</dbReference>
<dbReference type="GO" id="GO:0034605">
    <property type="term" value="P:cellular response to heat"/>
    <property type="evidence" value="ECO:0000270"/>
    <property type="project" value="EcoCyc"/>
</dbReference>
<dbReference type="GO" id="GO:0034614">
    <property type="term" value="P:cellular response to reactive oxygen species"/>
    <property type="evidence" value="ECO:0000315"/>
    <property type="project" value="EcoCyc"/>
</dbReference>
<dbReference type="GO" id="GO:0006974">
    <property type="term" value="P:DNA damage response"/>
    <property type="evidence" value="ECO:0000270"/>
    <property type="project" value="EcoCyc"/>
</dbReference>
<dbReference type="FunFam" id="3.30.110.170:FF:000001">
    <property type="entry name" value="Oxidative stress defense protein"/>
    <property type="match status" value="1"/>
</dbReference>
<dbReference type="FunFam" id="3.30.70.2970:FF:000001">
    <property type="entry name" value="Oxidative stress defense protein"/>
    <property type="match status" value="1"/>
</dbReference>
<dbReference type="Gene3D" id="3.30.110.170">
    <property type="entry name" value="Protein of unknown function (DUF541), domain 1"/>
    <property type="match status" value="1"/>
</dbReference>
<dbReference type="Gene3D" id="3.30.70.2970">
    <property type="entry name" value="Protein of unknown function (DUF541), domain 2"/>
    <property type="match status" value="1"/>
</dbReference>
<dbReference type="InterPro" id="IPR052022">
    <property type="entry name" value="26kDa_periplasmic_antigen"/>
</dbReference>
<dbReference type="InterPro" id="IPR007497">
    <property type="entry name" value="SIMPL/DUF541"/>
</dbReference>
<dbReference type="NCBIfam" id="NF008299">
    <property type="entry name" value="PRK11087.1"/>
    <property type="match status" value="1"/>
</dbReference>
<dbReference type="PANTHER" id="PTHR34387:SF1">
    <property type="entry name" value="PERIPLASMIC IMMUNOGENIC PROTEIN"/>
    <property type="match status" value="1"/>
</dbReference>
<dbReference type="PANTHER" id="PTHR34387">
    <property type="entry name" value="SLR1258 PROTEIN"/>
    <property type="match status" value="1"/>
</dbReference>
<dbReference type="Pfam" id="PF04402">
    <property type="entry name" value="SIMPL"/>
    <property type="match status" value="1"/>
</dbReference>
<accession>P0ADS6</accession>
<accession>P11668</accession>
<accession>Q2M9S0</accession>
<name>YGGE_ECOLI</name>
<protein>
    <recommendedName>
        <fullName>Uncharacterized protein YggE</fullName>
    </recommendedName>
</protein>